<comment type="function">
    <text evidence="1">Catalyzes the formation of S-adenosylmethionine (AdoMet) from methionine and ATP. The overall synthetic reaction is composed of two sequential steps, AdoMet formation and the subsequent tripolyphosphate hydrolysis which occurs prior to release of AdoMet from the enzyme.</text>
</comment>
<comment type="catalytic activity">
    <reaction evidence="1">
        <text>L-methionine + ATP + H2O = S-adenosyl-L-methionine + phosphate + diphosphate</text>
        <dbReference type="Rhea" id="RHEA:21080"/>
        <dbReference type="ChEBI" id="CHEBI:15377"/>
        <dbReference type="ChEBI" id="CHEBI:30616"/>
        <dbReference type="ChEBI" id="CHEBI:33019"/>
        <dbReference type="ChEBI" id="CHEBI:43474"/>
        <dbReference type="ChEBI" id="CHEBI:57844"/>
        <dbReference type="ChEBI" id="CHEBI:59789"/>
        <dbReference type="EC" id="2.5.1.6"/>
    </reaction>
</comment>
<comment type="cofactor">
    <cofactor evidence="1">
        <name>Mg(2+)</name>
        <dbReference type="ChEBI" id="CHEBI:18420"/>
    </cofactor>
    <text evidence="1">Binds 2 divalent ions per subunit.</text>
</comment>
<comment type="cofactor">
    <cofactor evidence="1">
        <name>K(+)</name>
        <dbReference type="ChEBI" id="CHEBI:29103"/>
    </cofactor>
    <text evidence="1">Binds 1 potassium ion per subunit.</text>
</comment>
<comment type="pathway">
    <text evidence="1">Amino-acid biosynthesis; S-adenosyl-L-methionine biosynthesis; S-adenosyl-L-methionine from L-methionine: step 1/1.</text>
</comment>
<comment type="subunit">
    <text evidence="1">Homotetramer; dimer of dimers.</text>
</comment>
<comment type="subcellular location">
    <subcellularLocation>
        <location evidence="1">Cytoplasm</location>
    </subcellularLocation>
</comment>
<comment type="similarity">
    <text evidence="1">Belongs to the AdoMet synthase family.</text>
</comment>
<proteinExistence type="inferred from homology"/>
<reference key="1">
    <citation type="journal article" date="2009" name="Vaccine">
        <title>Whole genome sequence analysis of Mycobacterium bovis bacillus Calmette-Guerin (BCG) Tokyo 172: a comparative study of BCG vaccine substrains.</title>
        <authorList>
            <person name="Seki M."/>
            <person name="Honda I."/>
            <person name="Fujita I."/>
            <person name="Yano I."/>
            <person name="Yamamoto S."/>
            <person name="Koyama A."/>
        </authorList>
    </citation>
    <scope>NUCLEOTIDE SEQUENCE [LARGE SCALE GENOMIC DNA]</scope>
    <source>
        <strain>BCG / Tokyo 172 / ATCC 35737 / TMC 1019</strain>
    </source>
</reference>
<protein>
    <recommendedName>
        <fullName evidence="1">S-adenosylmethionine synthase</fullName>
        <shortName evidence="1">AdoMet synthase</shortName>
        <ecNumber evidence="1">2.5.1.6</ecNumber>
    </recommendedName>
    <alternativeName>
        <fullName evidence="1">MAT</fullName>
    </alternativeName>
    <alternativeName>
        <fullName evidence="1">Methionine adenosyltransferase</fullName>
    </alternativeName>
</protein>
<accession>C1AN37</accession>
<feature type="chain" id="PRO_1000196720" description="S-adenosylmethionine synthase">
    <location>
        <begin position="1"/>
        <end position="403"/>
    </location>
</feature>
<feature type="region of interest" description="Flexible loop" evidence="1">
    <location>
        <begin position="104"/>
        <end position="114"/>
    </location>
</feature>
<feature type="binding site" description="in other chain" evidence="1">
    <location>
        <position position="17"/>
    </location>
    <ligand>
        <name>ATP</name>
        <dbReference type="ChEBI" id="CHEBI:30616"/>
        <note>ligand shared between two neighboring subunits</note>
    </ligand>
</feature>
<feature type="binding site" evidence="1">
    <location>
        <position position="19"/>
    </location>
    <ligand>
        <name>Mg(2+)</name>
        <dbReference type="ChEBI" id="CHEBI:18420"/>
    </ligand>
</feature>
<feature type="binding site" evidence="1">
    <location>
        <position position="45"/>
    </location>
    <ligand>
        <name>K(+)</name>
        <dbReference type="ChEBI" id="CHEBI:29103"/>
    </ligand>
</feature>
<feature type="binding site" description="in other chain" evidence="1">
    <location>
        <position position="58"/>
    </location>
    <ligand>
        <name>L-methionine</name>
        <dbReference type="ChEBI" id="CHEBI:57844"/>
        <note>ligand shared between two neighboring subunits</note>
    </ligand>
</feature>
<feature type="binding site" description="in other chain" evidence="1">
    <location>
        <position position="104"/>
    </location>
    <ligand>
        <name>L-methionine</name>
        <dbReference type="ChEBI" id="CHEBI:57844"/>
        <note>ligand shared between two neighboring subunits</note>
    </ligand>
</feature>
<feature type="binding site" description="in other chain" evidence="1">
    <location>
        <begin position="179"/>
        <end position="181"/>
    </location>
    <ligand>
        <name>ATP</name>
        <dbReference type="ChEBI" id="CHEBI:30616"/>
        <note>ligand shared between two neighboring subunits</note>
    </ligand>
</feature>
<feature type="binding site" description="in other chain" evidence="1">
    <location>
        <begin position="250"/>
        <end position="251"/>
    </location>
    <ligand>
        <name>ATP</name>
        <dbReference type="ChEBI" id="CHEBI:30616"/>
        <note>ligand shared between two neighboring subunits</note>
    </ligand>
</feature>
<feature type="binding site" evidence="1">
    <location>
        <position position="259"/>
    </location>
    <ligand>
        <name>ATP</name>
        <dbReference type="ChEBI" id="CHEBI:30616"/>
        <note>ligand shared between two neighboring subunits</note>
    </ligand>
</feature>
<feature type="binding site" evidence="1">
    <location>
        <position position="259"/>
    </location>
    <ligand>
        <name>L-methionine</name>
        <dbReference type="ChEBI" id="CHEBI:57844"/>
        <note>ligand shared between two neighboring subunits</note>
    </ligand>
</feature>
<feature type="binding site" description="in other chain" evidence="1">
    <location>
        <begin position="265"/>
        <end position="266"/>
    </location>
    <ligand>
        <name>ATP</name>
        <dbReference type="ChEBI" id="CHEBI:30616"/>
        <note>ligand shared between two neighboring subunits</note>
    </ligand>
</feature>
<feature type="binding site" evidence="1">
    <location>
        <position position="282"/>
    </location>
    <ligand>
        <name>ATP</name>
        <dbReference type="ChEBI" id="CHEBI:30616"/>
        <note>ligand shared between two neighboring subunits</note>
    </ligand>
</feature>
<feature type="binding site" evidence="1">
    <location>
        <position position="286"/>
    </location>
    <ligand>
        <name>ATP</name>
        <dbReference type="ChEBI" id="CHEBI:30616"/>
        <note>ligand shared between two neighboring subunits</note>
    </ligand>
</feature>
<feature type="binding site" description="in other chain" evidence="1">
    <location>
        <position position="290"/>
    </location>
    <ligand>
        <name>L-methionine</name>
        <dbReference type="ChEBI" id="CHEBI:57844"/>
        <note>ligand shared between two neighboring subunits</note>
    </ligand>
</feature>
<keyword id="KW-0067">ATP-binding</keyword>
<keyword id="KW-0963">Cytoplasm</keyword>
<keyword id="KW-0460">Magnesium</keyword>
<keyword id="KW-0479">Metal-binding</keyword>
<keyword id="KW-0547">Nucleotide-binding</keyword>
<keyword id="KW-0554">One-carbon metabolism</keyword>
<keyword id="KW-0630">Potassium</keyword>
<keyword id="KW-0808">Transferase</keyword>
<dbReference type="EC" id="2.5.1.6" evidence="1"/>
<dbReference type="EMBL" id="AP010918">
    <property type="protein sequence ID" value="BAH25716.1"/>
    <property type="molecule type" value="Genomic_DNA"/>
</dbReference>
<dbReference type="RefSeq" id="WP_011799178.1">
    <property type="nucleotide sequence ID" value="NZ_CP014566.1"/>
</dbReference>
<dbReference type="SMR" id="C1AN37"/>
<dbReference type="KEGG" id="mbt:JTY_1428"/>
<dbReference type="HOGENOM" id="CLU_041802_1_1_11"/>
<dbReference type="UniPathway" id="UPA00315">
    <property type="reaction ID" value="UER00080"/>
</dbReference>
<dbReference type="GO" id="GO:0005737">
    <property type="term" value="C:cytoplasm"/>
    <property type="evidence" value="ECO:0007669"/>
    <property type="project" value="UniProtKB-SubCell"/>
</dbReference>
<dbReference type="GO" id="GO:0005524">
    <property type="term" value="F:ATP binding"/>
    <property type="evidence" value="ECO:0007669"/>
    <property type="project" value="UniProtKB-UniRule"/>
</dbReference>
<dbReference type="GO" id="GO:0000287">
    <property type="term" value="F:magnesium ion binding"/>
    <property type="evidence" value="ECO:0007669"/>
    <property type="project" value="UniProtKB-UniRule"/>
</dbReference>
<dbReference type="GO" id="GO:0004478">
    <property type="term" value="F:methionine adenosyltransferase activity"/>
    <property type="evidence" value="ECO:0007669"/>
    <property type="project" value="UniProtKB-UniRule"/>
</dbReference>
<dbReference type="GO" id="GO:0006730">
    <property type="term" value="P:one-carbon metabolic process"/>
    <property type="evidence" value="ECO:0007669"/>
    <property type="project" value="UniProtKB-KW"/>
</dbReference>
<dbReference type="GO" id="GO:0006556">
    <property type="term" value="P:S-adenosylmethionine biosynthetic process"/>
    <property type="evidence" value="ECO:0007669"/>
    <property type="project" value="UniProtKB-UniRule"/>
</dbReference>
<dbReference type="CDD" id="cd18079">
    <property type="entry name" value="S-AdoMet_synt"/>
    <property type="match status" value="1"/>
</dbReference>
<dbReference type="FunFam" id="3.30.300.10:FF:000006">
    <property type="entry name" value="S-adenosylmethionine synthase"/>
    <property type="match status" value="1"/>
</dbReference>
<dbReference type="Gene3D" id="3.30.300.10">
    <property type="match status" value="3"/>
</dbReference>
<dbReference type="HAMAP" id="MF_00086">
    <property type="entry name" value="S_AdoMet_synth1"/>
    <property type="match status" value="1"/>
</dbReference>
<dbReference type="InterPro" id="IPR022631">
    <property type="entry name" value="ADOMET_SYNTHASE_CS"/>
</dbReference>
<dbReference type="InterPro" id="IPR022630">
    <property type="entry name" value="S-AdoMet_synt_C"/>
</dbReference>
<dbReference type="InterPro" id="IPR022629">
    <property type="entry name" value="S-AdoMet_synt_central"/>
</dbReference>
<dbReference type="InterPro" id="IPR022628">
    <property type="entry name" value="S-AdoMet_synt_N"/>
</dbReference>
<dbReference type="InterPro" id="IPR002133">
    <property type="entry name" value="S-AdoMet_synthetase"/>
</dbReference>
<dbReference type="InterPro" id="IPR022636">
    <property type="entry name" value="S-AdoMet_synthetase_sfam"/>
</dbReference>
<dbReference type="NCBIfam" id="TIGR01034">
    <property type="entry name" value="metK"/>
    <property type="match status" value="1"/>
</dbReference>
<dbReference type="PANTHER" id="PTHR11964">
    <property type="entry name" value="S-ADENOSYLMETHIONINE SYNTHETASE"/>
    <property type="match status" value="1"/>
</dbReference>
<dbReference type="Pfam" id="PF02773">
    <property type="entry name" value="S-AdoMet_synt_C"/>
    <property type="match status" value="1"/>
</dbReference>
<dbReference type="Pfam" id="PF02772">
    <property type="entry name" value="S-AdoMet_synt_M"/>
    <property type="match status" value="1"/>
</dbReference>
<dbReference type="Pfam" id="PF00438">
    <property type="entry name" value="S-AdoMet_synt_N"/>
    <property type="match status" value="1"/>
</dbReference>
<dbReference type="PIRSF" id="PIRSF000497">
    <property type="entry name" value="MAT"/>
    <property type="match status" value="1"/>
</dbReference>
<dbReference type="SUPFAM" id="SSF55973">
    <property type="entry name" value="S-adenosylmethionine synthetase"/>
    <property type="match status" value="3"/>
</dbReference>
<dbReference type="PROSITE" id="PS00376">
    <property type="entry name" value="ADOMET_SYNTHASE_1"/>
    <property type="match status" value="1"/>
</dbReference>
<dbReference type="PROSITE" id="PS00377">
    <property type="entry name" value="ADOMET_SYNTHASE_2"/>
    <property type="match status" value="1"/>
</dbReference>
<sequence length="403" mass="43019">MSEKGRLFTSESVTEGHPDKICDAISDSVLDALLAADPRSRVAVETLVTTGQVHVVGEVTTSAKEAFADITNTVRARILEIGYDSSDKGFDGATCGVNIGIGAQSPDIAQGVDTAHEARVEGAADPLDSQGAGDQGLMFGYAINATPELMPLPIALAHRLSRRLTEVRKNGVLPYLRPDGKTQVTIAYEDNVPVQLDTVVISTQHAADIDLEKTLDPDIREKVLNTVLDDLAHETLDASTVRVLVNPTGKFVLGGPMGDAGLTGRKIIVDTYGGWARHGGGAFSGKDPSKVDRSAAYAMRWVAKNVVAAGLAERVEVQVAYAIGKAAPVGLFVETFGTETEDPVKIEKAIGEVFDLRPGAIIRDLNLLRPIYAPTAAYGHFGRTDVELPWEQLDKVDDLKRAI</sequence>
<organism>
    <name type="scientific">Mycobacterium bovis (strain BCG / Tokyo 172 / ATCC 35737 / TMC 1019)</name>
    <dbReference type="NCBI Taxonomy" id="561275"/>
    <lineage>
        <taxon>Bacteria</taxon>
        <taxon>Bacillati</taxon>
        <taxon>Actinomycetota</taxon>
        <taxon>Actinomycetes</taxon>
        <taxon>Mycobacteriales</taxon>
        <taxon>Mycobacteriaceae</taxon>
        <taxon>Mycobacterium</taxon>
        <taxon>Mycobacterium tuberculosis complex</taxon>
    </lineage>
</organism>
<gene>
    <name evidence="1" type="primary">metK</name>
    <name type="ordered locus">JTY_1428</name>
</gene>
<name>METK_MYCBT</name>
<evidence type="ECO:0000255" key="1">
    <source>
        <dbReference type="HAMAP-Rule" id="MF_00086"/>
    </source>
</evidence>